<name>POL_EIAVC</name>
<accession>P32542</accession>
<dbReference type="EC" id="3.4.23.-"/>
<dbReference type="EC" id="2.7.7.49"/>
<dbReference type="EC" id="3.1.26.13"/>
<dbReference type="EC" id="3.1.13.2"/>
<dbReference type="EC" id="2.7.7.-" evidence="1"/>
<dbReference type="EC" id="3.1.-.-" evidence="1"/>
<dbReference type="EMBL" id="M87581">
    <property type="protein sequence ID" value="AAA43004.1"/>
    <property type="molecule type" value="Genomic_RNA"/>
</dbReference>
<dbReference type="PIR" id="B41991">
    <property type="entry name" value="GNLJ22"/>
</dbReference>
<dbReference type="PDB" id="1FMB">
    <property type="method" value="X-ray"/>
    <property type="resolution" value="1.80 A"/>
    <property type="chains" value="A=81-184"/>
</dbReference>
<dbReference type="PDB" id="2FMB">
    <property type="method" value="X-ray"/>
    <property type="resolution" value="1.80 A"/>
    <property type="chains" value="A=81-184"/>
</dbReference>
<dbReference type="PDBsum" id="1FMB"/>
<dbReference type="PDBsum" id="2FMB"/>
<dbReference type="SMR" id="P32542"/>
<dbReference type="MEROPS" id="A02.004"/>
<dbReference type="BRENDA" id="3.4.23.B3">
    <property type="organism ID" value="2115"/>
</dbReference>
<dbReference type="EvolutionaryTrace" id="P32542"/>
<dbReference type="GO" id="GO:0004190">
    <property type="term" value="F:aspartic-type endopeptidase activity"/>
    <property type="evidence" value="ECO:0007669"/>
    <property type="project" value="UniProtKB-KW"/>
</dbReference>
<dbReference type="GO" id="GO:0003677">
    <property type="term" value="F:DNA binding"/>
    <property type="evidence" value="ECO:0007669"/>
    <property type="project" value="UniProtKB-KW"/>
</dbReference>
<dbReference type="GO" id="GO:0004533">
    <property type="term" value="F:exoribonuclease H activity"/>
    <property type="evidence" value="ECO:0007669"/>
    <property type="project" value="UniProtKB-EC"/>
</dbReference>
<dbReference type="GO" id="GO:0035613">
    <property type="term" value="F:RNA stem-loop binding"/>
    <property type="evidence" value="ECO:0007669"/>
    <property type="project" value="TreeGrafter"/>
</dbReference>
<dbReference type="GO" id="GO:0003964">
    <property type="term" value="F:RNA-directed DNA polymerase activity"/>
    <property type="evidence" value="ECO:0007669"/>
    <property type="project" value="UniProtKB-KW"/>
</dbReference>
<dbReference type="GO" id="GO:0004523">
    <property type="term" value="F:RNA-DNA hybrid ribonuclease activity"/>
    <property type="evidence" value="ECO:0007669"/>
    <property type="project" value="InterPro"/>
</dbReference>
<dbReference type="GO" id="GO:0008270">
    <property type="term" value="F:zinc ion binding"/>
    <property type="evidence" value="ECO:0007669"/>
    <property type="project" value="UniProtKB-KW"/>
</dbReference>
<dbReference type="GO" id="GO:0015074">
    <property type="term" value="P:DNA integration"/>
    <property type="evidence" value="ECO:0007669"/>
    <property type="project" value="UniProtKB-KW"/>
</dbReference>
<dbReference type="GO" id="GO:0006310">
    <property type="term" value="P:DNA recombination"/>
    <property type="evidence" value="ECO:0007669"/>
    <property type="project" value="UniProtKB-KW"/>
</dbReference>
<dbReference type="GO" id="GO:0075713">
    <property type="term" value="P:establishment of integrated proviral latency"/>
    <property type="evidence" value="ECO:0007669"/>
    <property type="project" value="UniProtKB-KW"/>
</dbReference>
<dbReference type="GO" id="GO:0006508">
    <property type="term" value="P:proteolysis"/>
    <property type="evidence" value="ECO:0007669"/>
    <property type="project" value="UniProtKB-KW"/>
</dbReference>
<dbReference type="GO" id="GO:0046718">
    <property type="term" value="P:symbiont entry into host cell"/>
    <property type="evidence" value="ECO:0007669"/>
    <property type="project" value="UniProtKB-KW"/>
</dbReference>
<dbReference type="GO" id="GO:0044826">
    <property type="term" value="P:viral genome integration into host DNA"/>
    <property type="evidence" value="ECO:0007669"/>
    <property type="project" value="UniProtKB-KW"/>
</dbReference>
<dbReference type="CDD" id="cd09276">
    <property type="entry name" value="Rnase_HI_RT_non_LTR"/>
    <property type="match status" value="1"/>
</dbReference>
<dbReference type="CDD" id="cd07557">
    <property type="entry name" value="trimeric_dUTPase"/>
    <property type="match status" value="1"/>
</dbReference>
<dbReference type="FunFam" id="3.30.420.10:FF:000212">
    <property type="entry name" value="Pol polyprotein"/>
    <property type="match status" value="1"/>
</dbReference>
<dbReference type="Gene3D" id="1.10.10.200">
    <property type="match status" value="1"/>
</dbReference>
<dbReference type="Gene3D" id="2.70.40.10">
    <property type="match status" value="1"/>
</dbReference>
<dbReference type="Gene3D" id="3.30.70.270">
    <property type="match status" value="3"/>
</dbReference>
<dbReference type="Gene3D" id="2.40.70.10">
    <property type="entry name" value="Acid Proteases"/>
    <property type="match status" value="1"/>
</dbReference>
<dbReference type="Gene3D" id="3.10.10.10">
    <property type="entry name" value="HIV Type 1 Reverse Transcriptase, subunit A, domain 1"/>
    <property type="match status" value="1"/>
</dbReference>
<dbReference type="Gene3D" id="2.30.30.10">
    <property type="entry name" value="Integrase, C-terminal domain superfamily, retroviral"/>
    <property type="match status" value="1"/>
</dbReference>
<dbReference type="Gene3D" id="3.30.420.10">
    <property type="entry name" value="Ribonuclease H-like superfamily/Ribonuclease H"/>
    <property type="match status" value="2"/>
</dbReference>
<dbReference type="InterPro" id="IPR001969">
    <property type="entry name" value="Aspartic_peptidase_AS"/>
</dbReference>
<dbReference type="InterPro" id="IPR043502">
    <property type="entry name" value="DNA/RNA_pol_sf"/>
</dbReference>
<dbReference type="InterPro" id="IPR029054">
    <property type="entry name" value="dUTPase-like"/>
</dbReference>
<dbReference type="InterPro" id="IPR036157">
    <property type="entry name" value="dUTPase-like_sf"/>
</dbReference>
<dbReference type="InterPro" id="IPR033704">
    <property type="entry name" value="dUTPase_trimeric"/>
</dbReference>
<dbReference type="InterPro" id="IPR017856">
    <property type="entry name" value="Integrase-like_N"/>
</dbReference>
<dbReference type="InterPro" id="IPR036862">
    <property type="entry name" value="Integrase_C_dom_sf_retrovir"/>
</dbReference>
<dbReference type="InterPro" id="IPR001037">
    <property type="entry name" value="Integrase_C_retrovir"/>
</dbReference>
<dbReference type="InterPro" id="IPR001584">
    <property type="entry name" value="Integrase_cat-core"/>
</dbReference>
<dbReference type="InterPro" id="IPR003308">
    <property type="entry name" value="Integrase_Zn-bd_dom_N"/>
</dbReference>
<dbReference type="InterPro" id="IPR001995">
    <property type="entry name" value="Peptidase_A2_cat"/>
</dbReference>
<dbReference type="InterPro" id="IPR021109">
    <property type="entry name" value="Peptidase_aspartic_dom_sf"/>
</dbReference>
<dbReference type="InterPro" id="IPR018061">
    <property type="entry name" value="Retropepsins"/>
</dbReference>
<dbReference type="InterPro" id="IPR043128">
    <property type="entry name" value="Rev_trsase/Diguanyl_cyclase"/>
</dbReference>
<dbReference type="InterPro" id="IPR012337">
    <property type="entry name" value="RNaseH-like_sf"/>
</dbReference>
<dbReference type="InterPro" id="IPR002156">
    <property type="entry name" value="RNaseH_domain"/>
</dbReference>
<dbReference type="InterPro" id="IPR036397">
    <property type="entry name" value="RNaseH_sf"/>
</dbReference>
<dbReference type="InterPro" id="IPR000477">
    <property type="entry name" value="RT_dom"/>
</dbReference>
<dbReference type="InterPro" id="IPR010659">
    <property type="entry name" value="RVT_connect"/>
</dbReference>
<dbReference type="InterPro" id="IPR010661">
    <property type="entry name" value="RVT_thumb"/>
</dbReference>
<dbReference type="PANTHER" id="PTHR41694">
    <property type="entry name" value="ENDOGENOUS RETROVIRUS GROUP K MEMBER POL PROTEIN"/>
    <property type="match status" value="1"/>
</dbReference>
<dbReference type="PANTHER" id="PTHR41694:SF3">
    <property type="entry name" value="RNA-DIRECTED DNA POLYMERASE-RELATED"/>
    <property type="match status" value="1"/>
</dbReference>
<dbReference type="Pfam" id="PF00692">
    <property type="entry name" value="dUTPase"/>
    <property type="match status" value="1"/>
</dbReference>
<dbReference type="Pfam" id="PF00552">
    <property type="entry name" value="IN_DBD_C"/>
    <property type="match status" value="1"/>
</dbReference>
<dbReference type="Pfam" id="PF02022">
    <property type="entry name" value="Integrase_Zn"/>
    <property type="match status" value="1"/>
</dbReference>
<dbReference type="Pfam" id="PF00075">
    <property type="entry name" value="RNase_H"/>
    <property type="match status" value="1"/>
</dbReference>
<dbReference type="Pfam" id="PF00665">
    <property type="entry name" value="rve"/>
    <property type="match status" value="1"/>
</dbReference>
<dbReference type="Pfam" id="PF00077">
    <property type="entry name" value="RVP"/>
    <property type="match status" value="1"/>
</dbReference>
<dbReference type="Pfam" id="PF00078">
    <property type="entry name" value="RVT_1"/>
    <property type="match status" value="1"/>
</dbReference>
<dbReference type="Pfam" id="PF06815">
    <property type="entry name" value="RVT_connect"/>
    <property type="match status" value="1"/>
</dbReference>
<dbReference type="Pfam" id="PF06817">
    <property type="entry name" value="RVT_thumb"/>
    <property type="match status" value="1"/>
</dbReference>
<dbReference type="SUPFAM" id="SSF50630">
    <property type="entry name" value="Acid proteases"/>
    <property type="match status" value="1"/>
</dbReference>
<dbReference type="SUPFAM" id="SSF50122">
    <property type="entry name" value="DNA-binding domain of retroviral integrase"/>
    <property type="match status" value="1"/>
</dbReference>
<dbReference type="SUPFAM" id="SSF56672">
    <property type="entry name" value="DNA/RNA polymerases"/>
    <property type="match status" value="1"/>
</dbReference>
<dbReference type="SUPFAM" id="SSF51283">
    <property type="entry name" value="dUTPase-like"/>
    <property type="match status" value="1"/>
</dbReference>
<dbReference type="SUPFAM" id="SSF46919">
    <property type="entry name" value="N-terminal Zn binding domain of HIV integrase"/>
    <property type="match status" value="1"/>
</dbReference>
<dbReference type="SUPFAM" id="SSF53098">
    <property type="entry name" value="Ribonuclease H-like"/>
    <property type="match status" value="2"/>
</dbReference>
<dbReference type="PROSITE" id="PS50175">
    <property type="entry name" value="ASP_PROT_RETROV"/>
    <property type="match status" value="1"/>
</dbReference>
<dbReference type="PROSITE" id="PS00141">
    <property type="entry name" value="ASP_PROTEASE"/>
    <property type="match status" value="1"/>
</dbReference>
<dbReference type="PROSITE" id="PS50994">
    <property type="entry name" value="INTEGRASE"/>
    <property type="match status" value="1"/>
</dbReference>
<dbReference type="PROSITE" id="PS51027">
    <property type="entry name" value="INTEGRASE_DBD"/>
    <property type="match status" value="1"/>
</dbReference>
<dbReference type="PROSITE" id="PS50879">
    <property type="entry name" value="RNASE_H_1"/>
    <property type="match status" value="1"/>
</dbReference>
<dbReference type="PROSITE" id="PS50878">
    <property type="entry name" value="RT_POL"/>
    <property type="match status" value="1"/>
</dbReference>
<dbReference type="PROSITE" id="PS50876">
    <property type="entry name" value="ZF_INTEGRASE"/>
    <property type="match status" value="1"/>
</dbReference>
<organismHost>
    <name type="scientific">Equus asinus</name>
    <name type="common">Donkey</name>
    <name type="synonym">Equus africanus asinus</name>
    <dbReference type="NCBI Taxonomy" id="9793"/>
</organismHost>
<organismHost>
    <name type="scientific">Equus caballus</name>
    <name type="common">Horse</name>
    <dbReference type="NCBI Taxonomy" id="9796"/>
</organismHost>
<comment type="function">
    <text>During replicative cycle of retroviruses, the reverse-transcribed viral DNA is integrated into the host chromosome by the viral integrase enzyme. RNase H activity is associated with the reverse transcriptase.</text>
</comment>
<comment type="catalytic activity">
    <reaction>
        <text>Endohydrolysis of RNA in RNA/DNA hybrids. Three different cleavage modes: 1. sequence-specific internal cleavage of RNA. Human immunodeficiency virus type 1 and Moloney murine leukemia virus enzymes prefer to cleave the RNA strand one nucleotide away from the RNA-DNA junction. 2. RNA 5'-end directed cleavage 13-19 nucleotides from the RNA end. 3. DNA 3'-end directed cleavage 15-20 nucleotides away from the primer terminus.</text>
        <dbReference type="EC" id="3.1.26.13"/>
    </reaction>
</comment>
<comment type="catalytic activity">
    <reaction>
        <text>3'-end directed exonucleolytic cleavage of viral RNA-DNA hybrid.</text>
        <dbReference type="EC" id="3.1.13.2"/>
    </reaction>
</comment>
<comment type="catalytic activity">
    <reaction evidence="3">
        <text>DNA(n) + a 2'-deoxyribonucleoside 5'-triphosphate = DNA(n+1) + diphosphate</text>
        <dbReference type="Rhea" id="RHEA:22508"/>
        <dbReference type="Rhea" id="RHEA-COMP:17339"/>
        <dbReference type="Rhea" id="RHEA-COMP:17340"/>
        <dbReference type="ChEBI" id="CHEBI:33019"/>
        <dbReference type="ChEBI" id="CHEBI:61560"/>
        <dbReference type="ChEBI" id="CHEBI:173112"/>
        <dbReference type="EC" id="2.7.7.49"/>
    </reaction>
</comment>
<comment type="PTM">
    <text>Specific enzymatic cleavages in vivo yield mature proteins.</text>
</comment>
<comment type="similarity">
    <text evidence="10">Belongs to the retroviral Pol polyprotein family.</text>
</comment>
<gene>
    <name type="primary">pol</name>
</gene>
<protein>
    <recommendedName>
        <fullName>Pol polyprotein</fullName>
    </recommendedName>
    <component>
        <recommendedName>
            <fullName>Protease</fullName>
        </recommendedName>
        <alternativeName>
            <fullName>Retropepsin</fullName>
            <ecNumber>3.4.23.-</ecNumber>
        </alternativeName>
    </component>
    <component>
        <recommendedName>
            <fullName>Reverse transcriptase/ribonuclease H</fullName>
            <shortName>RT</shortName>
            <ecNumber>2.7.7.49</ecNumber>
            <ecNumber>3.1.26.13</ecNumber>
        </recommendedName>
        <alternativeName>
            <fullName>Exoribonuclease H</fullName>
            <ecNumber>3.1.13.2</ecNumber>
        </alternativeName>
    </component>
    <component>
        <recommendedName>
            <fullName>Integrase</fullName>
            <shortName>IN</shortName>
            <ecNumber evidence="1">2.7.7.-</ecNumber>
            <ecNumber evidence="1">3.1.-.-</ecNumber>
        </recommendedName>
    </component>
</protein>
<organism>
    <name type="scientific">Equine infectious anemia virus (isolate CL22)</name>
    <name type="common">EIAV</name>
    <dbReference type="NCBI Taxonomy" id="31675"/>
    <lineage>
        <taxon>Viruses</taxon>
        <taxon>Riboviria</taxon>
        <taxon>Pararnavirae</taxon>
        <taxon>Artverviricota</taxon>
        <taxon>Revtraviricetes</taxon>
        <taxon>Ortervirales</taxon>
        <taxon>Retroviridae</taxon>
        <taxon>Orthoretrovirinae</taxon>
        <taxon>Lentivirus</taxon>
        <taxon>Equine infectious anemia virus</taxon>
    </lineage>
</organism>
<keyword id="KW-0002">3D-structure</keyword>
<keyword id="KW-0064">Aspartyl protease</keyword>
<keyword id="KW-0165">Cleavage on pair of basic residues</keyword>
<keyword id="KW-0229">DNA integration</keyword>
<keyword id="KW-0233">DNA recombination</keyword>
<keyword id="KW-0238">DNA-binding</keyword>
<keyword id="KW-0255">Endonuclease</keyword>
<keyword id="KW-0378">Hydrolase</keyword>
<keyword id="KW-0479">Metal-binding</keyword>
<keyword id="KW-0511">Multifunctional enzyme</keyword>
<keyword id="KW-0540">Nuclease</keyword>
<keyword id="KW-0548">Nucleotidyltransferase</keyword>
<keyword id="KW-0645">Protease</keyword>
<keyword id="KW-0695">RNA-directed DNA polymerase</keyword>
<keyword id="KW-0808">Transferase</keyword>
<keyword id="KW-1179">Viral genome integration</keyword>
<keyword id="KW-1160">Virus entry into host cell</keyword>
<keyword id="KW-0862">Zinc</keyword>
<keyword id="KW-0863">Zinc-finger</keyword>
<sequence length="1146" mass="129509">TAWTFLKAMQKCSKKREARGSREAPETNFPDTTEESAQQICCTRDSSDSKSVPRSERNKKGIQCQGEGSSRGSQPGQFVGVTYNLEKRPTTIVLINDTPLNVLLDTGADTSVLTTAHYNRLKYRGRKYQGTGIIGVGGNVETFSTPVTIKKKGRHIKTRMLVADIPVTILGRDILQDLGAKLVLAQLSKEIKFRKIELKEGTMGPKIPQWPLTKEKLEGAKEIVQRLLSEGKISEASDNNPYNSPIFVIKKRSGKWRLLQDLRELNKTVQVGTEISRGLPHPGGLIKCKHMTVLDIGDAYFTIPLDPEFRPYTAFTIPSINHQEPDKRYVWNCLPQGFVLSPYIYQKTLQEILQPFRERYPEVQLYQYMDDLFVGSNGSKKQHKELIIELRAILLEKGFETPDDKLQEVPPYSWLGYQLCPENWKVQKMQLDMVKNPTLNDVQKLMGNITWMSSGVPGLTVKHIAATTKGCLELNQKVIWTEEAQKELEENNEKIKNAQGLQYYNPEEEMLCEVEITKNYEATYVIKQSQGILWAGKKIMKANKGWSTVKNLMLLLQHVATESITRVGKCPTFKVPFTKEQVMWEMQKGWYYSWLPEIVYTHQVVHDDWRMKLVEEPTSGITIYTDGGKQNGEGIAAYVTSNGRTKQKRLGPVTHQVAERMAIQMALEDTRDKQVNIVTDSYYCWKNITEGLGLEGPQSPWWPIIQNIREKEIVYFAWVPGHKGICGNQLADEAAKIKEEIMLAYQGTQIKEKRDEDAGFDLCVPYDIMIPVSDTKIIPTDVKIQVPPNSFGWVTGKSSMAKQGLLINGGIIDEGYTGEIQVICTNIGKSNIKLIEGQKFAQLIILQHHSNSRQPWDENKISQRGDKGFGSTGVFWVENIQEAQDEHENWHTSPKILARNYKIPLTVAKQITQECPHCTKQGSGPAGCVMRSPNHWQADCTHLDNKIILTFVESNSGYIHATLLSKENALCTSLAILEWARLFSPKSLHTDNGTNFVAEPVVNLLKFLKIAHTTGIPYHPESQGIVERANRTLKEKIQSHRDNTQTLEAALQLALITCNKGRESMGGQTPWEVFITNQAQVIHEKLLLQQAQSSKKFCFYKIPGEHDWKGPTRVLWKGDGAVVVNDEGKGIIAVPLTRTKLLIKPN</sequence>
<proteinExistence type="evidence at protein level"/>
<feature type="chain" id="PRO_0000038832" description="Protease">
    <location>
        <begin position="1"/>
        <end position="195"/>
    </location>
</feature>
<feature type="chain" id="PRO_0000038833" description="Reverse transcriptase/ribonuclease H">
    <location>
        <begin position="196"/>
        <end position="914"/>
    </location>
</feature>
<feature type="chain" id="PRO_0000038834" description="Integrase">
    <location>
        <begin position="915"/>
        <end position="1146"/>
    </location>
</feature>
<feature type="domain" description="Peptidase A2" evidence="2">
    <location>
        <begin position="100"/>
        <end position="174"/>
    </location>
</feature>
<feature type="domain" description="Reverse transcriptase" evidence="3">
    <location>
        <begin position="230"/>
        <end position="419"/>
    </location>
</feature>
<feature type="domain" description="RNase H type-1" evidence="4">
    <location>
        <begin position="617"/>
        <end position="740"/>
    </location>
</feature>
<feature type="domain" description="Integrase catalytic" evidence="6">
    <location>
        <begin position="921"/>
        <end position="1078"/>
    </location>
</feature>
<feature type="zinc finger region" description="Integrase-type" evidence="5">
    <location>
        <begin position="878"/>
        <end position="919"/>
    </location>
</feature>
<feature type="DNA-binding region" description="Integrase-type" evidence="7">
    <location>
        <begin position="1096"/>
        <end position="1144"/>
    </location>
</feature>
<feature type="region of interest" description="Disordered" evidence="9">
    <location>
        <begin position="13"/>
        <end position="77"/>
    </location>
</feature>
<feature type="compositionally biased region" description="Polar residues" evidence="9">
    <location>
        <begin position="29"/>
        <end position="41"/>
    </location>
</feature>
<feature type="compositionally biased region" description="Basic and acidic residues" evidence="9">
    <location>
        <begin position="45"/>
        <end position="59"/>
    </location>
</feature>
<feature type="compositionally biased region" description="Polar residues" evidence="9">
    <location>
        <begin position="66"/>
        <end position="76"/>
    </location>
</feature>
<feature type="active site" evidence="8">
    <location>
        <position position="105"/>
    </location>
</feature>
<feature type="binding site" evidence="5">
    <location>
        <position position="887"/>
    </location>
    <ligand>
        <name>Zn(2+)</name>
        <dbReference type="ChEBI" id="CHEBI:29105"/>
    </ligand>
</feature>
<feature type="binding site" evidence="5">
    <location>
        <position position="891"/>
    </location>
    <ligand>
        <name>Zn(2+)</name>
        <dbReference type="ChEBI" id="CHEBI:29105"/>
    </ligand>
</feature>
<feature type="binding site" evidence="5">
    <location>
        <position position="915"/>
    </location>
    <ligand>
        <name>Zn(2+)</name>
        <dbReference type="ChEBI" id="CHEBI:29105"/>
    </ligand>
</feature>
<feature type="binding site" evidence="5">
    <location>
        <position position="918"/>
    </location>
    <ligand>
        <name>Zn(2+)</name>
        <dbReference type="ChEBI" id="CHEBI:29105"/>
    </ligand>
</feature>
<feature type="strand" evidence="11">
    <location>
        <begin position="85"/>
        <end position="87"/>
    </location>
</feature>
<feature type="strand" evidence="11">
    <location>
        <begin position="90"/>
        <end position="95"/>
    </location>
</feature>
<feature type="strand" evidence="11">
    <location>
        <begin position="98"/>
        <end position="104"/>
    </location>
</feature>
<feature type="strand" evidence="11">
    <location>
        <begin position="112"/>
        <end position="114"/>
    </location>
</feature>
<feature type="helix" evidence="11">
    <location>
        <begin position="115"/>
        <end position="120"/>
    </location>
</feature>
<feature type="strand" evidence="11">
    <location>
        <begin position="133"/>
        <end position="135"/>
    </location>
</feature>
<feature type="strand" evidence="11">
    <location>
        <begin position="138"/>
        <end position="140"/>
    </location>
</feature>
<feature type="strand" evidence="11">
    <location>
        <begin position="143"/>
        <end position="151"/>
    </location>
</feature>
<feature type="strand" evidence="11">
    <location>
        <begin position="154"/>
        <end position="164"/>
    </location>
</feature>
<feature type="helix" evidence="11">
    <location>
        <begin position="172"/>
        <end position="177"/>
    </location>
</feature>
<reference key="1">
    <citation type="journal article" date="1992" name="J. Virol.">
        <title>The surface envelope protein gene region of equine infectious anemia virus is not an important determinant of tropism in vitro.</title>
        <authorList>
            <person name="Perry S.T."/>
            <person name="Flaherty M.T."/>
            <person name="Kelley M.J."/>
            <person name="Clabough D.L."/>
            <person name="Tronick S.R."/>
            <person name="Coggins L."/>
            <person name="Whetter L."/>
            <person name="Lengel C.R."/>
            <person name="Fuller F."/>
        </authorList>
    </citation>
    <scope>NUCLEOTIDE SEQUENCE [GENOMIC RNA]</scope>
</reference>
<reference key="2">
    <citation type="journal article" date="1993" name="Biochemistry">
        <title>Molecular model of equine infectious anemia virus proteinase and kinetic measurements for peptide substrates with single amino acid substitutions.</title>
        <authorList>
            <person name="Weber I.T."/>
            <person name="Tozser J."/>
            <person name="Wu J."/>
            <person name="Friedman D."/>
            <person name="Oroszlan S."/>
        </authorList>
    </citation>
    <scope>3D-STRUCTURE MODELING OF 81-184</scope>
</reference>
<reference key="3">
    <citation type="journal article" date="1996" name="Protein Sci.">
        <title>Structure of equine infectious anemia virus proteinase complexed with an inhibitor.</title>
        <authorList>
            <person name="Gustchina A."/>
            <person name="Kervinen J."/>
            <person name="Powell D.J."/>
            <person name="Zdanov A."/>
            <person name="Kay J."/>
            <person name="Wlodawer A."/>
        </authorList>
    </citation>
    <scope>X-RAY CRYSTALLOGRAPHY (1.8 ANGSTROMS) OF 81-184</scope>
</reference>
<evidence type="ECO:0000250" key="1">
    <source>
        <dbReference type="UniProtKB" id="P04585"/>
    </source>
</evidence>
<evidence type="ECO:0000255" key="2">
    <source>
        <dbReference type="PROSITE-ProRule" id="PRU00275"/>
    </source>
</evidence>
<evidence type="ECO:0000255" key="3">
    <source>
        <dbReference type="PROSITE-ProRule" id="PRU00405"/>
    </source>
</evidence>
<evidence type="ECO:0000255" key="4">
    <source>
        <dbReference type="PROSITE-ProRule" id="PRU00408"/>
    </source>
</evidence>
<evidence type="ECO:0000255" key="5">
    <source>
        <dbReference type="PROSITE-ProRule" id="PRU00450"/>
    </source>
</evidence>
<evidence type="ECO:0000255" key="6">
    <source>
        <dbReference type="PROSITE-ProRule" id="PRU00457"/>
    </source>
</evidence>
<evidence type="ECO:0000255" key="7">
    <source>
        <dbReference type="PROSITE-ProRule" id="PRU00506"/>
    </source>
</evidence>
<evidence type="ECO:0000255" key="8">
    <source>
        <dbReference type="PROSITE-ProRule" id="PRU10094"/>
    </source>
</evidence>
<evidence type="ECO:0000256" key="9">
    <source>
        <dbReference type="SAM" id="MobiDB-lite"/>
    </source>
</evidence>
<evidence type="ECO:0000305" key="10"/>
<evidence type="ECO:0007829" key="11">
    <source>
        <dbReference type="PDB" id="1FMB"/>
    </source>
</evidence>